<feature type="initiator methionine" description="Removed" evidence="3">
    <location>
        <position position="1"/>
    </location>
</feature>
<feature type="chain" id="PRO_1000095056" description="Elongation factor Tu">
    <location>
        <begin position="2"/>
        <end position="394"/>
    </location>
</feature>
<feature type="domain" description="tr-type G">
    <location>
        <begin position="10"/>
        <end position="204"/>
    </location>
</feature>
<feature type="region of interest" description="G1" evidence="1">
    <location>
        <begin position="19"/>
        <end position="26"/>
    </location>
</feature>
<feature type="region of interest" description="G2" evidence="1">
    <location>
        <begin position="60"/>
        <end position="64"/>
    </location>
</feature>
<feature type="region of interest" description="G3" evidence="1">
    <location>
        <begin position="81"/>
        <end position="84"/>
    </location>
</feature>
<feature type="region of interest" description="G4" evidence="1">
    <location>
        <begin position="136"/>
        <end position="139"/>
    </location>
</feature>
<feature type="region of interest" description="G5" evidence="1">
    <location>
        <begin position="174"/>
        <end position="176"/>
    </location>
</feature>
<feature type="binding site" evidence="2">
    <location>
        <begin position="19"/>
        <end position="26"/>
    </location>
    <ligand>
        <name>GTP</name>
        <dbReference type="ChEBI" id="CHEBI:37565"/>
    </ligand>
</feature>
<feature type="binding site" evidence="2">
    <location>
        <position position="26"/>
    </location>
    <ligand>
        <name>Mg(2+)</name>
        <dbReference type="ChEBI" id="CHEBI:18420"/>
    </ligand>
</feature>
<feature type="binding site" evidence="2">
    <location>
        <begin position="81"/>
        <end position="85"/>
    </location>
    <ligand>
        <name>GTP</name>
        <dbReference type="ChEBI" id="CHEBI:37565"/>
    </ligand>
</feature>
<feature type="binding site" evidence="2">
    <location>
        <begin position="136"/>
        <end position="139"/>
    </location>
    <ligand>
        <name>GTP</name>
        <dbReference type="ChEBI" id="CHEBI:37565"/>
    </ligand>
</feature>
<feature type="sequence conflict" description="In Ref. 3; AA sequence." evidence="4" ref="3">
    <original>P</original>
    <variation>D</variation>
    <location>
        <position position="11"/>
    </location>
</feature>
<feature type="sequence conflict" description="In Ref. 1; AAA62238." evidence="4" ref="1">
    <original>T</original>
    <variation>A</variation>
    <location>
        <position position="17"/>
    </location>
</feature>
<feature type="sequence conflict" description="In Ref. 1; AAA62238." evidence="4" ref="1">
    <original>K</original>
    <variation>R</variation>
    <location>
        <position position="25"/>
    </location>
</feature>
<feature type="sequence conflict" description="In Ref. 1; AAA62238." evidence="4" ref="1">
    <original>T</original>
    <variation>P</variation>
    <location>
        <position position="62"/>
    </location>
</feature>
<feature type="sequence conflict" description="In Ref. 1; AAA62238." evidence="4" ref="1">
    <original>G</original>
    <variation>C</variation>
    <location>
        <position position="84"/>
    </location>
</feature>
<feature type="sequence conflict" description="In Ref. 1; AAA62238." evidence="4" ref="1">
    <original>IVTGV</original>
    <variation>LLLGL</variation>
    <location>
        <begin position="255"/>
        <end position="259"/>
    </location>
</feature>
<feature type="sequence conflict" description="In Ref. 1; AAA62238." evidence="4" ref="1">
    <original>ELPEG</original>
    <variation>NSQKV</variation>
    <location>
        <begin position="265"/>
        <end position="269"/>
    </location>
</feature>
<feature type="sequence conflict" description="In Ref. 1; AAA62238." evidence="4" ref="1">
    <original>R</original>
    <variation>L</variation>
    <location>
        <position position="334"/>
    </location>
</feature>
<comment type="function">
    <text evidence="2">GTP hydrolase that promotes the GTP-dependent binding of aminoacyl-tRNA to the A-site of ribosomes during protein biosynthesis.</text>
</comment>
<comment type="catalytic activity">
    <reaction evidence="2">
        <text>GTP + H2O = GDP + phosphate + H(+)</text>
        <dbReference type="Rhea" id="RHEA:19669"/>
        <dbReference type="ChEBI" id="CHEBI:15377"/>
        <dbReference type="ChEBI" id="CHEBI:15378"/>
        <dbReference type="ChEBI" id="CHEBI:37565"/>
        <dbReference type="ChEBI" id="CHEBI:43474"/>
        <dbReference type="ChEBI" id="CHEBI:58189"/>
        <dbReference type="EC" id="3.6.5.3"/>
    </reaction>
    <physiologicalReaction direction="left-to-right" evidence="2">
        <dbReference type="Rhea" id="RHEA:19670"/>
    </physiologicalReaction>
</comment>
<comment type="subunit">
    <text evidence="2">Monomer.</text>
</comment>
<comment type="subcellular location">
    <subcellularLocation>
        <location evidence="2">Cytoplasm</location>
    </subcellularLocation>
</comment>
<comment type="similarity">
    <text evidence="2">Belongs to the TRAFAC class translation factor GTPase superfamily. Classic translation factor GTPase family. EF-Tu/EF-1A subfamily.</text>
</comment>
<reference key="1">
    <citation type="journal article" date="1992" name="Gene">
        <title>The sequence of the gene encoding elongation factor Tu from Chlamydia trachomatis compared with those of other organisms.</title>
        <authorList>
            <person name="Cousineau B."/>
            <person name="Cerpa C."/>
            <person name="Lefebvre J."/>
            <person name="Cedergren R."/>
        </authorList>
    </citation>
    <scope>NUCLEOTIDE SEQUENCE [GENOMIC DNA]</scope>
</reference>
<reference key="2">
    <citation type="journal article" date="2008" name="Genome Res.">
        <title>Chlamydia trachomatis: genome sequence analysis of lymphogranuloma venereum isolates.</title>
        <authorList>
            <person name="Thomson N.R."/>
            <person name="Holden M.T.G."/>
            <person name="Carder C."/>
            <person name="Lennard N."/>
            <person name="Lockey S.J."/>
            <person name="Marsh P."/>
            <person name="Skipp P."/>
            <person name="O'Connor C.D."/>
            <person name="Goodhead I."/>
            <person name="Norbertzcak H."/>
            <person name="Harris B."/>
            <person name="Ormond D."/>
            <person name="Rance R."/>
            <person name="Quail M.A."/>
            <person name="Parkhill J."/>
            <person name="Stephens R.S."/>
            <person name="Clarke I.N."/>
        </authorList>
    </citation>
    <scope>NUCLEOTIDE SEQUENCE [LARGE SCALE GENOMIC DNA]</scope>
    <source>
        <strain>ATCC VR-902B / DSM 19102 / 434/Bu</strain>
    </source>
</reference>
<reference key="3">
    <citation type="submission" date="1994-09" db="UniProtKB">
        <authorList>
            <person name="Bini L."/>
            <person name="Santucci A."/>
            <person name="Magi B."/>
            <person name="Marzocchi B."/>
            <person name="Sanchez-Campillo M."/>
            <person name="Comanducci M."/>
            <person name="Christianen G."/>
            <person name="Birkelund S."/>
            <person name="Vtretou E."/>
            <person name="Ratti G."/>
            <person name="Pallini V."/>
        </authorList>
    </citation>
    <scope>PROTEIN SEQUENCE OF 2-11</scope>
</reference>
<name>EFTU_CHLT2</name>
<organism>
    <name type="scientific">Chlamydia trachomatis serovar L2 (strain ATCC VR-902B / DSM 19102 / 434/Bu)</name>
    <dbReference type="NCBI Taxonomy" id="471472"/>
    <lineage>
        <taxon>Bacteria</taxon>
        <taxon>Pseudomonadati</taxon>
        <taxon>Chlamydiota</taxon>
        <taxon>Chlamydiia</taxon>
        <taxon>Chlamydiales</taxon>
        <taxon>Chlamydiaceae</taxon>
        <taxon>Chlamydia/Chlamydophila group</taxon>
        <taxon>Chlamydia</taxon>
    </lineage>
</organism>
<sequence>MSKETFQRNKPHINIGTIGHVDHGKTTLTAAITRTLSGDGLADFRDYSSIDNTPEEKARGITINASHVEYETANRHYAHVDCPGHADYVKNMITGAAQMDGAILVVSATDGAMPQTKEHILLARQVGVPYIVVFLNKIDMISEEDAELVDLVEMELAELLEEKGYKGCPIIRGSALKALEGDAAYIEKVRELMQAVDDNIPTPEREIDKPFLMPIEDVFSISGRGTVVTGRIERGIVKVSDKVQLVGLRDTKETIVTGVEMFRKELPEGRAGENVGLLLRGIGKNDVERGMVVCLPNSVKPHTRFKCAVYVLQKEEGGRHKPFFTGYRPQFFFRTTDVTGVVTLPEGVEMVMPGDNVEFEVQLISPVALEEGMRFAIREGGRTIGAGTISKIIA</sequence>
<evidence type="ECO:0000250" key="1"/>
<evidence type="ECO:0000255" key="2">
    <source>
        <dbReference type="HAMAP-Rule" id="MF_00118"/>
    </source>
</evidence>
<evidence type="ECO:0000269" key="3">
    <source ref="3"/>
</evidence>
<evidence type="ECO:0000305" key="4"/>
<keyword id="KW-0963">Cytoplasm</keyword>
<keyword id="KW-0903">Direct protein sequencing</keyword>
<keyword id="KW-0251">Elongation factor</keyword>
<keyword id="KW-0342">GTP-binding</keyword>
<keyword id="KW-0378">Hydrolase</keyword>
<keyword id="KW-0460">Magnesium</keyword>
<keyword id="KW-0479">Metal-binding</keyword>
<keyword id="KW-0547">Nucleotide-binding</keyword>
<keyword id="KW-0648">Protein biosynthesis</keyword>
<proteinExistence type="evidence at protein level"/>
<dbReference type="EC" id="3.6.5.3" evidence="2"/>
<dbReference type="EMBL" id="M74221">
    <property type="protein sequence ID" value="AAA62238.1"/>
    <property type="molecule type" value="Genomic_DNA"/>
</dbReference>
<dbReference type="EMBL" id="AM884176">
    <property type="protein sequence ID" value="CAP04014.1"/>
    <property type="molecule type" value="Genomic_DNA"/>
</dbReference>
<dbReference type="PIR" id="JC1420">
    <property type="entry name" value="JC1420"/>
</dbReference>
<dbReference type="RefSeq" id="WP_009873724.1">
    <property type="nucleotide sequence ID" value="NC_010287.1"/>
</dbReference>
<dbReference type="RefSeq" id="YP_001654650.1">
    <property type="nucleotide sequence ID" value="NC_010287.1"/>
</dbReference>
<dbReference type="SMR" id="B0B7N8"/>
<dbReference type="KEGG" id="ctb:CTL0574"/>
<dbReference type="PATRIC" id="fig|471472.4.peg.615"/>
<dbReference type="HOGENOM" id="CLU_007265_0_0_0"/>
<dbReference type="Proteomes" id="UP001154402">
    <property type="component" value="Chromosome"/>
</dbReference>
<dbReference type="GO" id="GO:0005829">
    <property type="term" value="C:cytosol"/>
    <property type="evidence" value="ECO:0007669"/>
    <property type="project" value="TreeGrafter"/>
</dbReference>
<dbReference type="GO" id="GO:0005525">
    <property type="term" value="F:GTP binding"/>
    <property type="evidence" value="ECO:0007669"/>
    <property type="project" value="UniProtKB-UniRule"/>
</dbReference>
<dbReference type="GO" id="GO:0003924">
    <property type="term" value="F:GTPase activity"/>
    <property type="evidence" value="ECO:0007669"/>
    <property type="project" value="InterPro"/>
</dbReference>
<dbReference type="GO" id="GO:0003746">
    <property type="term" value="F:translation elongation factor activity"/>
    <property type="evidence" value="ECO:0007669"/>
    <property type="project" value="UniProtKB-UniRule"/>
</dbReference>
<dbReference type="CDD" id="cd01884">
    <property type="entry name" value="EF_Tu"/>
    <property type="match status" value="1"/>
</dbReference>
<dbReference type="CDD" id="cd03697">
    <property type="entry name" value="EFTU_II"/>
    <property type="match status" value="1"/>
</dbReference>
<dbReference type="CDD" id="cd03707">
    <property type="entry name" value="EFTU_III"/>
    <property type="match status" value="1"/>
</dbReference>
<dbReference type="FunFam" id="2.40.30.10:FF:000001">
    <property type="entry name" value="Elongation factor Tu"/>
    <property type="match status" value="1"/>
</dbReference>
<dbReference type="FunFam" id="3.40.50.300:FF:000003">
    <property type="entry name" value="Elongation factor Tu"/>
    <property type="match status" value="1"/>
</dbReference>
<dbReference type="Gene3D" id="3.40.50.300">
    <property type="entry name" value="P-loop containing nucleotide triphosphate hydrolases"/>
    <property type="match status" value="1"/>
</dbReference>
<dbReference type="Gene3D" id="2.40.30.10">
    <property type="entry name" value="Translation factors"/>
    <property type="match status" value="2"/>
</dbReference>
<dbReference type="HAMAP" id="MF_00118_B">
    <property type="entry name" value="EF_Tu_B"/>
    <property type="match status" value="1"/>
</dbReference>
<dbReference type="InterPro" id="IPR041709">
    <property type="entry name" value="EF-Tu_GTP-bd"/>
</dbReference>
<dbReference type="InterPro" id="IPR050055">
    <property type="entry name" value="EF-Tu_GTPase"/>
</dbReference>
<dbReference type="InterPro" id="IPR004161">
    <property type="entry name" value="EFTu-like_2"/>
</dbReference>
<dbReference type="InterPro" id="IPR033720">
    <property type="entry name" value="EFTU_2"/>
</dbReference>
<dbReference type="InterPro" id="IPR031157">
    <property type="entry name" value="G_TR_CS"/>
</dbReference>
<dbReference type="InterPro" id="IPR027417">
    <property type="entry name" value="P-loop_NTPase"/>
</dbReference>
<dbReference type="InterPro" id="IPR005225">
    <property type="entry name" value="Small_GTP-bd"/>
</dbReference>
<dbReference type="InterPro" id="IPR000795">
    <property type="entry name" value="T_Tr_GTP-bd_dom"/>
</dbReference>
<dbReference type="InterPro" id="IPR009000">
    <property type="entry name" value="Transl_B-barrel_sf"/>
</dbReference>
<dbReference type="InterPro" id="IPR009001">
    <property type="entry name" value="Transl_elong_EF1A/Init_IF2_C"/>
</dbReference>
<dbReference type="InterPro" id="IPR004541">
    <property type="entry name" value="Transl_elong_EFTu/EF1A_bac/org"/>
</dbReference>
<dbReference type="InterPro" id="IPR004160">
    <property type="entry name" value="Transl_elong_EFTu/EF1A_C"/>
</dbReference>
<dbReference type="NCBIfam" id="TIGR00485">
    <property type="entry name" value="EF-Tu"/>
    <property type="match status" value="1"/>
</dbReference>
<dbReference type="NCBIfam" id="NF000766">
    <property type="entry name" value="PRK00049.1"/>
    <property type="match status" value="1"/>
</dbReference>
<dbReference type="NCBIfam" id="NF009372">
    <property type="entry name" value="PRK12735.1"/>
    <property type="match status" value="1"/>
</dbReference>
<dbReference type="NCBIfam" id="NF009373">
    <property type="entry name" value="PRK12736.1"/>
    <property type="match status" value="1"/>
</dbReference>
<dbReference type="NCBIfam" id="TIGR00231">
    <property type="entry name" value="small_GTP"/>
    <property type="match status" value="1"/>
</dbReference>
<dbReference type="PANTHER" id="PTHR43721:SF22">
    <property type="entry name" value="ELONGATION FACTOR TU, MITOCHONDRIAL"/>
    <property type="match status" value="1"/>
</dbReference>
<dbReference type="PANTHER" id="PTHR43721">
    <property type="entry name" value="ELONGATION FACTOR TU-RELATED"/>
    <property type="match status" value="1"/>
</dbReference>
<dbReference type="Pfam" id="PF00009">
    <property type="entry name" value="GTP_EFTU"/>
    <property type="match status" value="1"/>
</dbReference>
<dbReference type="Pfam" id="PF03144">
    <property type="entry name" value="GTP_EFTU_D2"/>
    <property type="match status" value="1"/>
</dbReference>
<dbReference type="Pfam" id="PF03143">
    <property type="entry name" value="GTP_EFTU_D3"/>
    <property type="match status" value="1"/>
</dbReference>
<dbReference type="PRINTS" id="PR00315">
    <property type="entry name" value="ELONGATNFCT"/>
</dbReference>
<dbReference type="SUPFAM" id="SSF50465">
    <property type="entry name" value="EF-Tu/eEF-1alpha/eIF2-gamma C-terminal domain"/>
    <property type="match status" value="1"/>
</dbReference>
<dbReference type="SUPFAM" id="SSF52540">
    <property type="entry name" value="P-loop containing nucleoside triphosphate hydrolases"/>
    <property type="match status" value="1"/>
</dbReference>
<dbReference type="SUPFAM" id="SSF50447">
    <property type="entry name" value="Translation proteins"/>
    <property type="match status" value="1"/>
</dbReference>
<dbReference type="PROSITE" id="PS00301">
    <property type="entry name" value="G_TR_1"/>
    <property type="match status" value="1"/>
</dbReference>
<dbReference type="PROSITE" id="PS51722">
    <property type="entry name" value="G_TR_2"/>
    <property type="match status" value="1"/>
</dbReference>
<gene>
    <name evidence="2" type="primary">tuf</name>
    <name type="ordered locus">CTL0574</name>
</gene>
<protein>
    <recommendedName>
        <fullName evidence="2">Elongation factor Tu</fullName>
        <shortName evidence="2">EF-Tu</shortName>
        <ecNumber evidence="2">3.6.5.3</ecNumber>
    </recommendedName>
</protein>
<accession>B0B7N8</accession>
<accession>O84324</accession>
<accession>P26622</accession>